<name>PG070_VACCW</name>
<feature type="chain" id="PRO_0000099462" description="Protein OPG070">
    <location>
        <begin position="1"/>
        <end position="273"/>
    </location>
</feature>
<feature type="transmembrane region" description="Helical" evidence="1">
    <location>
        <begin position="123"/>
        <end position="143"/>
    </location>
</feature>
<feature type="transmembrane region" description="Helical" evidence="1">
    <location>
        <begin position="238"/>
        <end position="260"/>
    </location>
</feature>
<sequence length="273" mass="31889">MAATVPRFDDVYKNAQRRILDQETFFSRGLSRPLMKNTYLFDNYAYGWIPETAIWSSRYANLDASDYYPISLGLLKKFEFLMSLYKGPIPVYEEKVNTEFIANGSFSGRYVSYLRKFSALPTNEFISFLLLTSIPIYNILFWFKNTQFDITKHTLFRYVYTDNAKHLALARYMHQTGDYKPLFSRLKENYIFTGPVPIGIKDINHPNLSRARSPSDYETLANISTILYFTKYDPVLMFLLFYVPGYSITTKITPAVEYLMDKLNLTKSDVQLL</sequence>
<gene>
    <name type="primary">OPG070</name>
    <name type="ordered locus">VACWR064</name>
    <name type="ORF">E8R</name>
</gene>
<organism>
    <name type="scientific">Vaccinia virus (strain Western Reserve)</name>
    <name type="common">VACV</name>
    <name type="synonym">Vaccinia virus (strain WR)</name>
    <dbReference type="NCBI Taxonomy" id="10254"/>
    <lineage>
        <taxon>Viruses</taxon>
        <taxon>Varidnaviria</taxon>
        <taxon>Bamfordvirae</taxon>
        <taxon>Nucleocytoviricota</taxon>
        <taxon>Pokkesviricetes</taxon>
        <taxon>Chitovirales</taxon>
        <taxon>Poxviridae</taxon>
        <taxon>Chordopoxvirinae</taxon>
        <taxon>Orthopoxvirus</taxon>
        <taxon>Vaccinia virus</taxon>
    </lineage>
</organism>
<keyword id="KW-1035">Host cytoplasm</keyword>
<keyword id="KW-1038">Host endoplasmic reticulum</keyword>
<keyword id="KW-1043">Host membrane</keyword>
<keyword id="KW-0472">Membrane</keyword>
<keyword id="KW-0597">Phosphoprotein</keyword>
<keyword id="KW-1185">Reference proteome</keyword>
<keyword id="KW-0812">Transmembrane</keyword>
<keyword id="KW-1133">Transmembrane helix</keyword>
<keyword id="KW-0946">Virion</keyword>
<evidence type="ECO:0000255" key="1"/>
<evidence type="ECO:0000269" key="2">
    <source>
    </source>
</evidence>
<evidence type="ECO:0000269" key="3">
    <source>
    </source>
</evidence>
<evidence type="ECO:0000269" key="4">
    <source>
    </source>
</evidence>
<evidence type="ECO:0000305" key="5"/>
<proteinExistence type="evidence at protein level"/>
<accession>P23372</accession>
<accession>Q76ZV7</accession>
<comment type="function">
    <text evidence="3">May play a role in the biogenesis of the viral factories by recruiting and wrapping DNA replication sites in endoplasmic reticulum derived membranes. Later in infection, phosphorylation by the late viral kinase OPG054/F10L might decrease DNA-binding ability and trigger ER membranes disassembly. Binds DNA in vitro.</text>
</comment>
<comment type="subcellular location">
    <subcellularLocation>
        <location>Virion</location>
    </subcellularLocation>
    <subcellularLocation>
        <location evidence="5">Host endoplasmic reticulum membrane</location>
        <topology evidence="5">Multi-pass membrane protein</topology>
    </subcellularLocation>
    <subcellularLocation>
        <location>Host cytoplasm</location>
    </subcellularLocation>
    <text evidence="2 3">Localizes to the inside membrane of cytoplasmic virus factories. Component of the core of mature virions.</text>
</comment>
<comment type="induction">
    <text evidence="4">Expressed in the intermediate phase of the viral replicative cycle.</text>
</comment>
<comment type="PTM">
    <text evidence="3">Phosphorylated by OPG054/F10L kinase in vitro.</text>
</comment>
<comment type="similarity">
    <text evidence="5">Belongs to the orthopoxvirus OPG070 family.</text>
</comment>
<dbReference type="EMBL" id="M36339">
    <property type="protein sequence ID" value="AAB59828.1"/>
    <property type="molecule type" value="Genomic_DNA"/>
</dbReference>
<dbReference type="EMBL" id="AY243312">
    <property type="protein sequence ID" value="AAO89343.1"/>
    <property type="molecule type" value="Genomic_DNA"/>
</dbReference>
<dbReference type="RefSeq" id="YP_232946.1">
    <property type="nucleotide sequence ID" value="NC_006998.1"/>
</dbReference>
<dbReference type="DIP" id="DIP-2179N"/>
<dbReference type="IntAct" id="P23372">
    <property type="interactions" value="1"/>
</dbReference>
<dbReference type="MINT" id="P23372"/>
<dbReference type="DNASU" id="3707597"/>
<dbReference type="GeneID" id="3707597"/>
<dbReference type="KEGG" id="vg:3707597"/>
<dbReference type="Proteomes" id="UP000000344">
    <property type="component" value="Genome"/>
</dbReference>
<dbReference type="GO" id="GO:0044167">
    <property type="term" value="C:host cell endoplasmic reticulum membrane"/>
    <property type="evidence" value="ECO:0007669"/>
    <property type="project" value="UniProtKB-SubCell"/>
</dbReference>
<dbReference type="GO" id="GO:0016020">
    <property type="term" value="C:membrane"/>
    <property type="evidence" value="ECO:0007669"/>
    <property type="project" value="UniProtKB-KW"/>
</dbReference>
<dbReference type="GO" id="GO:0044423">
    <property type="term" value="C:virion component"/>
    <property type="evidence" value="ECO:0007669"/>
    <property type="project" value="UniProtKB-KW"/>
</dbReference>
<dbReference type="InterPro" id="IPR005057">
    <property type="entry name" value="Poxvirus_E8"/>
</dbReference>
<dbReference type="Pfam" id="PF03394">
    <property type="entry name" value="Pox_E8"/>
    <property type="match status" value="1"/>
</dbReference>
<dbReference type="PIRSF" id="PIRSF015690">
    <property type="entry name" value="VAC_E8R"/>
    <property type="match status" value="1"/>
</dbReference>
<organismHost>
    <name type="scientific">Bos taurus</name>
    <name type="common">Bovine</name>
    <dbReference type="NCBI Taxonomy" id="9913"/>
</organismHost>
<protein>
    <recommendedName>
        <fullName>Protein OPG070</fullName>
    </recommendedName>
    <alternativeName>
        <fullName>Protein E8</fullName>
    </alternativeName>
</protein>
<reference key="1">
    <citation type="journal article" date="1990" name="Mol. Cell. Biol.">
        <title>Identification of rpo30, a vaccinia virus RNA polymerase gene with structural similarity to a eucaryotic transcription elongation factor.</title>
        <authorList>
            <person name="Ahn B.-Y."/>
            <person name="Gershon P.D."/>
            <person name="Jones E.V."/>
            <person name="Moss B."/>
        </authorList>
    </citation>
    <scope>NUCLEOTIDE SEQUENCE [GENOMIC DNA]</scope>
</reference>
<reference key="2">
    <citation type="submission" date="2003-02" db="EMBL/GenBank/DDBJ databases">
        <title>Sequencing of the coding region of Vaccinia-WR to an average 9-fold redundancy and an error rate of 0.16/10kb.</title>
        <authorList>
            <person name="Esposito J.J."/>
            <person name="Frace A.M."/>
            <person name="Sammons S.A."/>
            <person name="Olsen-Rasmussen M."/>
            <person name="Osborne J."/>
            <person name="Wohlhueter R."/>
        </authorList>
    </citation>
    <scope>NUCLEOTIDE SEQUENCE [GENOMIC DNA]</scope>
</reference>
<reference key="3">
    <citation type="journal article" date="2001" name="Mol. Biol. Cell">
        <title>Vaccinia virus DNA replication occurs in endoplasmic reticulum-enclosed cytoplasmic mini-nuclei.</title>
        <authorList>
            <person name="Tolonen N."/>
            <person name="Doglio L."/>
            <person name="Schleich S."/>
            <person name="Krijnse Locker J."/>
        </authorList>
    </citation>
    <scope>SUBCELLULAR LOCATION</scope>
</reference>
<reference key="4">
    <citation type="journal article" date="2002" name="J. Virol.">
        <title>The Vaccinia virus E8R gene product: a viral membrane protein that is made early in infection and packaged into the virions' core.</title>
        <authorList>
            <person name="Doglio L."/>
            <person name="De Marco A."/>
            <person name="Schleich S."/>
            <person name="Roos N."/>
            <person name="Krijnse Locker J."/>
        </authorList>
    </citation>
    <scope>FUNCTION</scope>
    <scope>SUBCELLULAR LOCATION</scope>
    <scope>DNA-BINDING</scope>
    <scope>PHOSPHORYLATION BY F10L</scope>
</reference>
<reference key="5">
    <citation type="journal article" date="2005" name="Traffic">
        <title>Cytoplasmic organization of POXvirus DNA replication.</title>
        <authorList>
            <person name="Schramm B."/>
            <person name="Locker J.K."/>
        </authorList>
    </citation>
    <scope>REVIEW</scope>
</reference>
<reference key="6">
    <citation type="journal article" date="2015" name="J. Virol.">
        <title>Deciphering poxvirus gene expression by RNA sequencing and ribosome profiling.</title>
        <authorList>
            <person name="Yang Z."/>
            <person name="Cao S."/>
            <person name="Martens C.A."/>
            <person name="Porcella S.F."/>
            <person name="Xie Z."/>
            <person name="Ma M."/>
            <person name="Shen B."/>
            <person name="Moss B."/>
        </authorList>
    </citation>
    <scope>INDUCTION</scope>
</reference>